<reference key="1">
    <citation type="journal article" date="2009" name="J. Bacteriol.">
        <title>The genome of Burkholderia cenocepacia J2315, an epidemic pathogen of cystic fibrosis patients.</title>
        <authorList>
            <person name="Holden M.T."/>
            <person name="Seth-Smith H.M."/>
            <person name="Crossman L.C."/>
            <person name="Sebaihia M."/>
            <person name="Bentley S.D."/>
            <person name="Cerdeno-Tarraga A.M."/>
            <person name="Thomson N.R."/>
            <person name="Bason N."/>
            <person name="Quail M.A."/>
            <person name="Sharp S."/>
            <person name="Cherevach I."/>
            <person name="Churcher C."/>
            <person name="Goodhead I."/>
            <person name="Hauser H."/>
            <person name="Holroyd N."/>
            <person name="Mungall K."/>
            <person name="Scott P."/>
            <person name="Walker D."/>
            <person name="White B."/>
            <person name="Rose H."/>
            <person name="Iversen P."/>
            <person name="Mil-Homens D."/>
            <person name="Rocha E.P."/>
            <person name="Fialho A.M."/>
            <person name="Baldwin A."/>
            <person name="Dowson C."/>
            <person name="Barrell B.G."/>
            <person name="Govan J.R."/>
            <person name="Vandamme P."/>
            <person name="Hart C.A."/>
            <person name="Mahenthiralingam E."/>
            <person name="Parkhill J."/>
        </authorList>
    </citation>
    <scope>NUCLEOTIDE SEQUENCE [LARGE SCALE GENOMIC DNA]</scope>
    <source>
        <strain>ATCC BAA-245 / DSM 16553 / LMG 16656 / NCTC 13227 / J2315 / CF5610</strain>
    </source>
</reference>
<sequence>MDYLDLGPYSSASGTVRLPGSKSISNRVLLLAALAEGETTITNLLDSDDTRVMLDALGKLGVKLARDGDTCVVTGTRGAFTAKTADLFLGNAGTAVRPLTAALAVNGGDYRVHGVPRMHERPIGDLVDGLRQIGAQIDYELNEGYPPLRIKPATISVDAPIRVRGDVSSQFLTALLMTLPLVKAKDGRTVVEVDGELISKPYIDITIRLMARFGVTVERDGWQRFVVPAGVRYRSPGRIMVEGDASSASYFLAAGALGGGPLRVEGVGRASIQGDVGFANALMQMGANVTMGDDWIDVRGIGHDHGKLEPIDMDFNLIPDAAMTIAVAALFANGTSTLRNIASWRVKETDRIAAMATELRKVGAIVEEGPDYLVVTPPAKLTPNAAIDTYDDHRMAMCFSLVSLGGVPVRINDPKCVGKTFPDYFDRFAALAKA</sequence>
<evidence type="ECO:0000255" key="1">
    <source>
        <dbReference type="HAMAP-Rule" id="MF_00210"/>
    </source>
</evidence>
<feature type="chain" id="PRO_1000099671" description="3-phosphoshikimate 1-carboxyvinyltransferase">
    <location>
        <begin position="1"/>
        <end position="434"/>
    </location>
</feature>
<feature type="active site" description="Proton acceptor" evidence="1">
    <location>
        <position position="320"/>
    </location>
</feature>
<feature type="binding site" evidence="1">
    <location>
        <position position="22"/>
    </location>
    <ligand>
        <name>3-phosphoshikimate</name>
        <dbReference type="ChEBI" id="CHEBI:145989"/>
    </ligand>
</feature>
<feature type="binding site" evidence="1">
    <location>
        <position position="22"/>
    </location>
    <ligand>
        <name>phosphoenolpyruvate</name>
        <dbReference type="ChEBI" id="CHEBI:58702"/>
    </ligand>
</feature>
<feature type="binding site" evidence="1">
    <location>
        <position position="23"/>
    </location>
    <ligand>
        <name>3-phosphoshikimate</name>
        <dbReference type="ChEBI" id="CHEBI:145989"/>
    </ligand>
</feature>
<feature type="binding site" evidence="1">
    <location>
        <position position="27"/>
    </location>
    <ligand>
        <name>3-phosphoshikimate</name>
        <dbReference type="ChEBI" id="CHEBI:145989"/>
    </ligand>
</feature>
<feature type="binding site" evidence="1">
    <location>
        <position position="93"/>
    </location>
    <ligand>
        <name>phosphoenolpyruvate</name>
        <dbReference type="ChEBI" id="CHEBI:58702"/>
    </ligand>
</feature>
<feature type="binding site" evidence="1">
    <location>
        <position position="121"/>
    </location>
    <ligand>
        <name>phosphoenolpyruvate</name>
        <dbReference type="ChEBI" id="CHEBI:58702"/>
    </ligand>
</feature>
<feature type="binding site" evidence="1">
    <location>
        <position position="168"/>
    </location>
    <ligand>
        <name>3-phosphoshikimate</name>
        <dbReference type="ChEBI" id="CHEBI:145989"/>
    </ligand>
</feature>
<feature type="binding site" evidence="1">
    <location>
        <position position="169"/>
    </location>
    <ligand>
        <name>3-phosphoshikimate</name>
        <dbReference type="ChEBI" id="CHEBI:145989"/>
    </ligand>
</feature>
<feature type="binding site" evidence="1">
    <location>
        <position position="170"/>
    </location>
    <ligand>
        <name>3-phosphoshikimate</name>
        <dbReference type="ChEBI" id="CHEBI:145989"/>
    </ligand>
</feature>
<feature type="binding site" evidence="1">
    <location>
        <position position="170"/>
    </location>
    <ligand>
        <name>phosphoenolpyruvate</name>
        <dbReference type="ChEBI" id="CHEBI:58702"/>
    </ligand>
</feature>
<feature type="binding site" evidence="1">
    <location>
        <position position="199"/>
    </location>
    <ligand>
        <name>3-phosphoshikimate</name>
        <dbReference type="ChEBI" id="CHEBI:145989"/>
    </ligand>
</feature>
<feature type="binding site" evidence="1">
    <location>
        <position position="320"/>
    </location>
    <ligand>
        <name>3-phosphoshikimate</name>
        <dbReference type="ChEBI" id="CHEBI:145989"/>
    </ligand>
</feature>
<feature type="binding site" evidence="1">
    <location>
        <position position="347"/>
    </location>
    <ligand>
        <name>3-phosphoshikimate</name>
        <dbReference type="ChEBI" id="CHEBI:145989"/>
    </ligand>
</feature>
<feature type="binding site" evidence="1">
    <location>
        <position position="351"/>
    </location>
    <ligand>
        <name>phosphoenolpyruvate</name>
        <dbReference type="ChEBI" id="CHEBI:58702"/>
    </ligand>
</feature>
<feature type="binding site" evidence="1">
    <location>
        <position position="394"/>
    </location>
    <ligand>
        <name>phosphoenolpyruvate</name>
        <dbReference type="ChEBI" id="CHEBI:58702"/>
    </ligand>
</feature>
<feature type="binding site" evidence="1">
    <location>
        <position position="419"/>
    </location>
    <ligand>
        <name>phosphoenolpyruvate</name>
        <dbReference type="ChEBI" id="CHEBI:58702"/>
    </ligand>
</feature>
<accession>B4EB42</accession>
<organism>
    <name type="scientific">Burkholderia cenocepacia (strain ATCC BAA-245 / DSM 16553 / LMG 16656 / NCTC 13227 / J2315 / CF5610)</name>
    <name type="common">Burkholderia cepacia (strain J2315)</name>
    <dbReference type="NCBI Taxonomy" id="216591"/>
    <lineage>
        <taxon>Bacteria</taxon>
        <taxon>Pseudomonadati</taxon>
        <taxon>Pseudomonadota</taxon>
        <taxon>Betaproteobacteria</taxon>
        <taxon>Burkholderiales</taxon>
        <taxon>Burkholderiaceae</taxon>
        <taxon>Burkholderia</taxon>
        <taxon>Burkholderia cepacia complex</taxon>
    </lineage>
</organism>
<dbReference type="EC" id="2.5.1.19" evidence="1"/>
<dbReference type="EMBL" id="AM747720">
    <property type="protein sequence ID" value="CAR53255.1"/>
    <property type="molecule type" value="Genomic_DNA"/>
</dbReference>
<dbReference type="RefSeq" id="WP_006486921.1">
    <property type="nucleotide sequence ID" value="NC_011000.1"/>
</dbReference>
<dbReference type="SMR" id="B4EB42"/>
<dbReference type="GeneID" id="56557489"/>
<dbReference type="KEGG" id="bcj:BCAL2952"/>
<dbReference type="eggNOG" id="COG0128">
    <property type="taxonomic scope" value="Bacteria"/>
</dbReference>
<dbReference type="HOGENOM" id="CLU_024321_0_0_4"/>
<dbReference type="BioCyc" id="BCEN216591:G1G1V-3261-MONOMER"/>
<dbReference type="UniPathway" id="UPA00053">
    <property type="reaction ID" value="UER00089"/>
</dbReference>
<dbReference type="Proteomes" id="UP000001035">
    <property type="component" value="Chromosome 1"/>
</dbReference>
<dbReference type="GO" id="GO:0005737">
    <property type="term" value="C:cytoplasm"/>
    <property type="evidence" value="ECO:0007669"/>
    <property type="project" value="UniProtKB-SubCell"/>
</dbReference>
<dbReference type="GO" id="GO:0003866">
    <property type="term" value="F:3-phosphoshikimate 1-carboxyvinyltransferase activity"/>
    <property type="evidence" value="ECO:0007669"/>
    <property type="project" value="UniProtKB-UniRule"/>
</dbReference>
<dbReference type="GO" id="GO:0008652">
    <property type="term" value="P:amino acid biosynthetic process"/>
    <property type="evidence" value="ECO:0007669"/>
    <property type="project" value="UniProtKB-KW"/>
</dbReference>
<dbReference type="GO" id="GO:0009073">
    <property type="term" value="P:aromatic amino acid family biosynthetic process"/>
    <property type="evidence" value="ECO:0007669"/>
    <property type="project" value="UniProtKB-KW"/>
</dbReference>
<dbReference type="GO" id="GO:0009423">
    <property type="term" value="P:chorismate biosynthetic process"/>
    <property type="evidence" value="ECO:0007669"/>
    <property type="project" value="UniProtKB-UniRule"/>
</dbReference>
<dbReference type="CDD" id="cd01556">
    <property type="entry name" value="EPSP_synthase"/>
    <property type="match status" value="1"/>
</dbReference>
<dbReference type="FunFam" id="3.65.10.10:FF:000003">
    <property type="entry name" value="3-phosphoshikimate 1-carboxyvinyltransferase"/>
    <property type="match status" value="1"/>
</dbReference>
<dbReference type="FunFam" id="3.65.10.10:FF:000004">
    <property type="entry name" value="3-phosphoshikimate 1-carboxyvinyltransferase"/>
    <property type="match status" value="1"/>
</dbReference>
<dbReference type="Gene3D" id="3.65.10.10">
    <property type="entry name" value="Enolpyruvate transferase domain"/>
    <property type="match status" value="2"/>
</dbReference>
<dbReference type="HAMAP" id="MF_00210">
    <property type="entry name" value="EPSP_synth"/>
    <property type="match status" value="1"/>
</dbReference>
<dbReference type="InterPro" id="IPR001986">
    <property type="entry name" value="Enolpyruvate_Tfrase_dom"/>
</dbReference>
<dbReference type="InterPro" id="IPR036968">
    <property type="entry name" value="Enolpyruvate_Tfrase_sf"/>
</dbReference>
<dbReference type="InterPro" id="IPR006264">
    <property type="entry name" value="EPSP_synthase"/>
</dbReference>
<dbReference type="InterPro" id="IPR023193">
    <property type="entry name" value="EPSP_synthase_CS"/>
</dbReference>
<dbReference type="InterPro" id="IPR013792">
    <property type="entry name" value="RNA3'P_cycl/enolpyr_Trfase_a/b"/>
</dbReference>
<dbReference type="NCBIfam" id="TIGR01356">
    <property type="entry name" value="aroA"/>
    <property type="match status" value="1"/>
</dbReference>
<dbReference type="PANTHER" id="PTHR21090">
    <property type="entry name" value="AROM/DEHYDROQUINATE SYNTHASE"/>
    <property type="match status" value="1"/>
</dbReference>
<dbReference type="PANTHER" id="PTHR21090:SF5">
    <property type="entry name" value="PENTAFUNCTIONAL AROM POLYPEPTIDE"/>
    <property type="match status" value="1"/>
</dbReference>
<dbReference type="Pfam" id="PF00275">
    <property type="entry name" value="EPSP_synthase"/>
    <property type="match status" value="1"/>
</dbReference>
<dbReference type="PIRSF" id="PIRSF000505">
    <property type="entry name" value="EPSPS"/>
    <property type="match status" value="1"/>
</dbReference>
<dbReference type="SUPFAM" id="SSF55205">
    <property type="entry name" value="EPT/RTPC-like"/>
    <property type="match status" value="1"/>
</dbReference>
<dbReference type="PROSITE" id="PS00104">
    <property type="entry name" value="EPSP_SYNTHASE_1"/>
    <property type="match status" value="1"/>
</dbReference>
<dbReference type="PROSITE" id="PS00885">
    <property type="entry name" value="EPSP_SYNTHASE_2"/>
    <property type="match status" value="1"/>
</dbReference>
<keyword id="KW-0028">Amino-acid biosynthesis</keyword>
<keyword id="KW-0057">Aromatic amino acid biosynthesis</keyword>
<keyword id="KW-0963">Cytoplasm</keyword>
<keyword id="KW-0808">Transferase</keyword>
<proteinExistence type="inferred from homology"/>
<comment type="function">
    <text evidence="1">Catalyzes the transfer of the enolpyruvyl moiety of phosphoenolpyruvate (PEP) to the 5-hydroxyl of shikimate-3-phosphate (S3P) to produce enolpyruvyl shikimate-3-phosphate and inorganic phosphate.</text>
</comment>
<comment type="catalytic activity">
    <reaction evidence="1">
        <text>3-phosphoshikimate + phosphoenolpyruvate = 5-O-(1-carboxyvinyl)-3-phosphoshikimate + phosphate</text>
        <dbReference type="Rhea" id="RHEA:21256"/>
        <dbReference type="ChEBI" id="CHEBI:43474"/>
        <dbReference type="ChEBI" id="CHEBI:57701"/>
        <dbReference type="ChEBI" id="CHEBI:58702"/>
        <dbReference type="ChEBI" id="CHEBI:145989"/>
        <dbReference type="EC" id="2.5.1.19"/>
    </reaction>
    <physiologicalReaction direction="left-to-right" evidence="1">
        <dbReference type="Rhea" id="RHEA:21257"/>
    </physiologicalReaction>
</comment>
<comment type="pathway">
    <text evidence="1">Metabolic intermediate biosynthesis; chorismate biosynthesis; chorismate from D-erythrose 4-phosphate and phosphoenolpyruvate: step 6/7.</text>
</comment>
<comment type="subunit">
    <text evidence="1">Monomer.</text>
</comment>
<comment type="subcellular location">
    <subcellularLocation>
        <location evidence="1">Cytoplasm</location>
    </subcellularLocation>
</comment>
<comment type="similarity">
    <text evidence="1">Belongs to the EPSP synthase family.</text>
</comment>
<gene>
    <name evidence="1" type="primary">aroA</name>
    <name type="ordered locus">BceJ2315_28880</name>
    <name type="ORF">BCAL2952</name>
</gene>
<name>AROA_BURCJ</name>
<protein>
    <recommendedName>
        <fullName evidence="1">3-phosphoshikimate 1-carboxyvinyltransferase</fullName>
        <ecNumber evidence="1">2.5.1.19</ecNumber>
    </recommendedName>
    <alternativeName>
        <fullName evidence="1">5-enolpyruvylshikimate-3-phosphate synthase</fullName>
        <shortName evidence="1">EPSP synthase</shortName>
        <shortName evidence="1">EPSPS</shortName>
    </alternativeName>
</protein>